<feature type="signal peptide" evidence="3">
    <location>
        <begin position="1"/>
        <end position="19"/>
    </location>
</feature>
<feature type="chain" id="PRO_0000326069" description="Probable inactive serine protease 37">
    <location>
        <begin position="20"/>
        <end position="235"/>
    </location>
</feature>
<feature type="domain" description="Peptidase S1" evidence="4">
    <location>
        <begin position="20"/>
        <end position="233"/>
    </location>
</feature>
<feature type="disulfide bond" evidence="4">
    <location>
        <begin position="40"/>
        <end position="56"/>
    </location>
</feature>
<feature type="disulfide bond" evidence="4">
    <location>
        <begin position="131"/>
        <end position="198"/>
    </location>
</feature>
<feature type="disulfide bond" evidence="4">
    <location>
        <begin position="163"/>
        <end position="177"/>
    </location>
</feature>
<reference key="1">
    <citation type="submission" date="2005-11" db="EMBL/GenBank/DDBJ databases">
        <authorList>
            <consortium name="NIH - Mammalian Gene Collection (MGC) project"/>
        </authorList>
    </citation>
    <scope>NUCLEOTIDE SEQUENCE [LARGE SCALE MRNA]</scope>
    <source>
        <strain>Crossbred X Angus</strain>
        <tissue>Liver</tissue>
    </source>
</reference>
<accession>Q32KU2</accession>
<organism>
    <name type="scientific">Bos taurus</name>
    <name type="common">Bovine</name>
    <dbReference type="NCBI Taxonomy" id="9913"/>
    <lineage>
        <taxon>Eukaryota</taxon>
        <taxon>Metazoa</taxon>
        <taxon>Chordata</taxon>
        <taxon>Craniata</taxon>
        <taxon>Vertebrata</taxon>
        <taxon>Euteleostomi</taxon>
        <taxon>Mammalia</taxon>
        <taxon>Eutheria</taxon>
        <taxon>Laurasiatheria</taxon>
        <taxon>Artiodactyla</taxon>
        <taxon>Ruminantia</taxon>
        <taxon>Pecora</taxon>
        <taxon>Bovidae</taxon>
        <taxon>Bovinae</taxon>
        <taxon>Bos</taxon>
    </lineage>
</organism>
<name>PRS37_BOVIN</name>
<comment type="function">
    <text evidence="1 2">Plays a role in male fertility. May have a role in sperm migration or binding to zona-intact eggs. Involved in the activation of the proacrosin/acrosin system.</text>
</comment>
<comment type="subcellular location">
    <subcellularLocation>
        <location evidence="1">Cytoplasmic vesicle</location>
        <location evidence="1">Secretory vesicle</location>
        <location evidence="1">Acrosome</location>
    </subcellularLocation>
    <subcellularLocation>
        <location evidence="1">Secreted</location>
    </subcellularLocation>
</comment>
<comment type="similarity">
    <text evidence="4">Belongs to the peptidase S1 family.</text>
</comment>
<comment type="caution">
    <text evidence="5">Although related to peptidase S1 family, lacks the conserved active Ser residue in position 192 which is replaced by an Ala, suggesting that it has no protease activity. Also lacks metal binding sites Glu in position 67 which is replaced by Asn, and Asn in position 69 which is replaced by Arg.</text>
</comment>
<gene>
    <name evidence="1" type="primary">PRSS37</name>
    <name type="synonym">TRYX2</name>
</gene>
<proteinExistence type="evidence at transcript level"/>
<sequence length="235" mass="26316">MKFTFCLTVLAGTFFSAHSSVQKDDPSPYLVYLKSHFNPCVGVLIKSNWVLAPAHCYLPNLKVMLGNLRIRIRDGTEQTINPIQIIRYWNHSHTAPQDDLMLIRLAKPAILNEKVQPIALATSTVKPGTICMLSGLDWSQNNNGRHPDLRQNLEAPVMSDTACQETEQGKSHRNSICVKFLKVFSRIFGELAVATVICKNKLQGIEVGHFMGGDVGIYTNVQKYVSWIESTTKDK</sequence>
<protein>
    <recommendedName>
        <fullName evidence="5">Probable inactive serine protease 37</fullName>
    </recommendedName>
    <alternativeName>
        <fullName>Probable inactive trypsin-X2</fullName>
    </alternativeName>
</protein>
<dbReference type="EMBL" id="BC109928">
    <property type="protein sequence ID" value="AAI09929.1"/>
    <property type="molecule type" value="mRNA"/>
</dbReference>
<dbReference type="RefSeq" id="NP_001035659.1">
    <property type="nucleotide sequence ID" value="NM_001040569.2"/>
</dbReference>
<dbReference type="SMR" id="Q32KU2"/>
<dbReference type="FunCoup" id="Q32KU2">
    <property type="interactions" value="129"/>
</dbReference>
<dbReference type="STRING" id="9913.ENSBTAP00000024541"/>
<dbReference type="PaxDb" id="9913-ENSBTAP00000024541"/>
<dbReference type="Ensembl" id="ENSBTAT00000024541.3">
    <property type="protein sequence ID" value="ENSBTAP00000024541.2"/>
    <property type="gene ID" value="ENSBTAG00000018442.4"/>
</dbReference>
<dbReference type="GeneID" id="540062"/>
<dbReference type="KEGG" id="bta:540062"/>
<dbReference type="CTD" id="136242"/>
<dbReference type="VEuPathDB" id="HostDB:ENSBTAG00000018442"/>
<dbReference type="VGNC" id="VGNC:33420">
    <property type="gene designation" value="PRSS37"/>
</dbReference>
<dbReference type="eggNOG" id="KOG3627">
    <property type="taxonomic scope" value="Eukaryota"/>
</dbReference>
<dbReference type="GeneTree" id="ENSGT00940000161483"/>
<dbReference type="HOGENOM" id="CLU_006842_7_0_1"/>
<dbReference type="InParanoid" id="Q32KU2"/>
<dbReference type="OMA" id="DKDCQKT"/>
<dbReference type="OrthoDB" id="5565075at2759"/>
<dbReference type="TreeFam" id="TF331065"/>
<dbReference type="Proteomes" id="UP000009136">
    <property type="component" value="Chromosome 4"/>
</dbReference>
<dbReference type="Bgee" id="ENSBTAG00000018442">
    <property type="expression patterns" value="Expressed in spermatid and 14 other cell types or tissues"/>
</dbReference>
<dbReference type="GO" id="GO:0001669">
    <property type="term" value="C:acrosomal vesicle"/>
    <property type="evidence" value="ECO:0000250"/>
    <property type="project" value="UniProtKB"/>
</dbReference>
<dbReference type="GO" id="GO:0005615">
    <property type="term" value="C:extracellular space"/>
    <property type="evidence" value="ECO:0000318"/>
    <property type="project" value="GO_Central"/>
</dbReference>
<dbReference type="GO" id="GO:0007339">
    <property type="term" value="P:binding of sperm to zona pellucida"/>
    <property type="evidence" value="ECO:0000250"/>
    <property type="project" value="UniProtKB"/>
</dbReference>
<dbReference type="GO" id="GO:0016477">
    <property type="term" value="P:cell migration"/>
    <property type="evidence" value="ECO:0000250"/>
    <property type="project" value="UniProtKB"/>
</dbReference>
<dbReference type="GO" id="GO:0008354">
    <property type="term" value="P:germ cell migration"/>
    <property type="evidence" value="ECO:0007669"/>
    <property type="project" value="Ensembl"/>
</dbReference>
<dbReference type="GO" id="GO:2000344">
    <property type="term" value="P:positive regulation of acrosome reaction"/>
    <property type="evidence" value="ECO:0000250"/>
    <property type="project" value="UniProtKB"/>
</dbReference>
<dbReference type="GO" id="GO:1905516">
    <property type="term" value="P:positive regulation of fertilization"/>
    <property type="evidence" value="ECO:0000250"/>
    <property type="project" value="UniProtKB"/>
</dbReference>
<dbReference type="GO" id="GO:0051604">
    <property type="term" value="P:protein maturation"/>
    <property type="evidence" value="ECO:0000250"/>
    <property type="project" value="UniProtKB"/>
</dbReference>
<dbReference type="GO" id="GO:0006508">
    <property type="term" value="P:proteolysis"/>
    <property type="evidence" value="ECO:0007669"/>
    <property type="project" value="InterPro"/>
</dbReference>
<dbReference type="GO" id="GO:0070613">
    <property type="term" value="P:regulation of protein processing"/>
    <property type="evidence" value="ECO:0000250"/>
    <property type="project" value="UniProtKB"/>
</dbReference>
<dbReference type="FunFam" id="2.40.10.10:FF:000049">
    <property type="entry name" value="probable inactive serine protease 37"/>
    <property type="match status" value="1"/>
</dbReference>
<dbReference type="FunFam" id="2.40.10.10:FF:000005">
    <property type="entry name" value="Serine protease 37"/>
    <property type="match status" value="1"/>
</dbReference>
<dbReference type="Gene3D" id="2.40.10.10">
    <property type="entry name" value="Trypsin-like serine proteases"/>
    <property type="match status" value="2"/>
</dbReference>
<dbReference type="InterPro" id="IPR009003">
    <property type="entry name" value="Peptidase_S1_PA"/>
</dbReference>
<dbReference type="InterPro" id="IPR043504">
    <property type="entry name" value="Peptidase_S1_PA_chymotrypsin"/>
</dbReference>
<dbReference type="InterPro" id="IPR001254">
    <property type="entry name" value="Trypsin_dom"/>
</dbReference>
<dbReference type="PANTHER" id="PTHR24271:SF61">
    <property type="entry name" value="INACTIVE SERINE PROTEASE 37-RELATED"/>
    <property type="match status" value="1"/>
</dbReference>
<dbReference type="PANTHER" id="PTHR24271">
    <property type="entry name" value="KALLIKREIN-RELATED"/>
    <property type="match status" value="1"/>
</dbReference>
<dbReference type="Pfam" id="PF00089">
    <property type="entry name" value="Trypsin"/>
    <property type="match status" value="1"/>
</dbReference>
<dbReference type="SMART" id="SM00020">
    <property type="entry name" value="Tryp_SPc"/>
    <property type="match status" value="1"/>
</dbReference>
<dbReference type="SUPFAM" id="SSF50494">
    <property type="entry name" value="Trypsin-like serine proteases"/>
    <property type="match status" value="1"/>
</dbReference>
<dbReference type="PROSITE" id="PS50240">
    <property type="entry name" value="TRYPSIN_DOM"/>
    <property type="match status" value="1"/>
</dbReference>
<keyword id="KW-0968">Cytoplasmic vesicle</keyword>
<keyword id="KW-1015">Disulfide bond</keyword>
<keyword id="KW-0278">Fertilization</keyword>
<keyword id="KW-1185">Reference proteome</keyword>
<keyword id="KW-0964">Secreted</keyword>
<keyword id="KW-0732">Signal</keyword>
<evidence type="ECO:0000250" key="1">
    <source>
        <dbReference type="UniProtKB" id="A4D1T9"/>
    </source>
</evidence>
<evidence type="ECO:0000250" key="2">
    <source>
        <dbReference type="UniProtKB" id="Q9DAA4"/>
    </source>
</evidence>
<evidence type="ECO:0000255" key="3"/>
<evidence type="ECO:0000255" key="4">
    <source>
        <dbReference type="PROSITE-ProRule" id="PRU00274"/>
    </source>
</evidence>
<evidence type="ECO:0000305" key="5"/>